<proteinExistence type="inferred from homology"/>
<name>TGT_LEPCP</name>
<sequence length="390" mass="43549">MLNFDLLTTEGHARRGRLTLNHGVVETPIFMPVGTYGTVKGVMPRDLETMGAQIILGNTFHLWMRPGQDVMAQFGGLHRFENWTRPILTDSGGFQVWSLGEMRKISEEGVRFASPVNGDKLFLTPEVSMQIQTVLNSDIVMQFDECTPYWQGAKNVGHITTEKEARVSMELSLRWAARSKAEFARLGNPNALFGIVQGGMFESLREESLNALVELDFPGYAVGGVSVGEPKDEMLRIMNHTPHLLPADKPRYLMGVGTPEDLVDGVACGVDMFDCVMPTRNARNGHLFTRYGDLKIRNARHKADERPLDETCSCQACKGSTLPDGRVTGGFSRAYLHHLDRCGEMLGPMLASIHNLHYYLNLMREVREALDAGRFEAFRAQFKADRARGV</sequence>
<keyword id="KW-0328">Glycosyltransferase</keyword>
<keyword id="KW-0479">Metal-binding</keyword>
<keyword id="KW-0671">Queuosine biosynthesis</keyword>
<keyword id="KW-1185">Reference proteome</keyword>
<keyword id="KW-0808">Transferase</keyword>
<keyword id="KW-0819">tRNA processing</keyword>
<keyword id="KW-0862">Zinc</keyword>
<feature type="chain" id="PRO_1000097550" description="Queuine tRNA-ribosyltransferase">
    <location>
        <begin position="1"/>
        <end position="390"/>
    </location>
</feature>
<feature type="region of interest" description="RNA binding" evidence="1">
    <location>
        <begin position="255"/>
        <end position="261"/>
    </location>
</feature>
<feature type="region of interest" description="RNA binding; important for wobble base 34 recognition" evidence="1">
    <location>
        <begin position="279"/>
        <end position="283"/>
    </location>
</feature>
<feature type="active site" description="Proton acceptor" evidence="1">
    <location>
        <position position="90"/>
    </location>
</feature>
<feature type="active site" description="Nucleophile" evidence="1">
    <location>
        <position position="274"/>
    </location>
</feature>
<feature type="binding site" evidence="1">
    <location>
        <begin position="90"/>
        <end position="94"/>
    </location>
    <ligand>
        <name>substrate</name>
    </ligand>
</feature>
<feature type="binding site" evidence="1">
    <location>
        <position position="144"/>
    </location>
    <ligand>
        <name>substrate</name>
    </ligand>
</feature>
<feature type="binding site" evidence="1">
    <location>
        <position position="197"/>
    </location>
    <ligand>
        <name>substrate</name>
    </ligand>
</feature>
<feature type="binding site" evidence="1">
    <location>
        <position position="224"/>
    </location>
    <ligand>
        <name>substrate</name>
    </ligand>
</feature>
<feature type="binding site" evidence="1">
    <location>
        <position position="312"/>
    </location>
    <ligand>
        <name>Zn(2+)</name>
        <dbReference type="ChEBI" id="CHEBI:29105"/>
    </ligand>
</feature>
<feature type="binding site" evidence="1">
    <location>
        <position position="314"/>
    </location>
    <ligand>
        <name>Zn(2+)</name>
        <dbReference type="ChEBI" id="CHEBI:29105"/>
    </ligand>
</feature>
<feature type="binding site" evidence="1">
    <location>
        <position position="317"/>
    </location>
    <ligand>
        <name>Zn(2+)</name>
        <dbReference type="ChEBI" id="CHEBI:29105"/>
    </ligand>
</feature>
<feature type="binding site" evidence="1">
    <location>
        <position position="354"/>
    </location>
    <ligand>
        <name>Zn(2+)</name>
        <dbReference type="ChEBI" id="CHEBI:29105"/>
    </ligand>
</feature>
<protein>
    <recommendedName>
        <fullName evidence="1">Queuine tRNA-ribosyltransferase</fullName>
        <ecNumber evidence="1">2.4.2.29</ecNumber>
    </recommendedName>
    <alternativeName>
        <fullName evidence="1">Guanine insertion enzyme</fullName>
    </alternativeName>
    <alternativeName>
        <fullName evidence="1">tRNA-guanine transglycosylase</fullName>
    </alternativeName>
</protein>
<accession>B1XWG6</accession>
<organism>
    <name type="scientific">Leptothrix cholodnii (strain ATCC 51168 / LMG 8142 / SP-6)</name>
    <name type="common">Leptothrix discophora (strain SP-6)</name>
    <dbReference type="NCBI Taxonomy" id="395495"/>
    <lineage>
        <taxon>Bacteria</taxon>
        <taxon>Pseudomonadati</taxon>
        <taxon>Pseudomonadota</taxon>
        <taxon>Betaproteobacteria</taxon>
        <taxon>Burkholderiales</taxon>
        <taxon>Sphaerotilaceae</taxon>
        <taxon>Leptothrix</taxon>
    </lineage>
</organism>
<evidence type="ECO:0000255" key="1">
    <source>
        <dbReference type="HAMAP-Rule" id="MF_00168"/>
    </source>
</evidence>
<dbReference type="EC" id="2.4.2.29" evidence="1"/>
<dbReference type="EMBL" id="CP001013">
    <property type="protein sequence ID" value="ACB33834.1"/>
    <property type="molecule type" value="Genomic_DNA"/>
</dbReference>
<dbReference type="RefSeq" id="WP_012346595.1">
    <property type="nucleotide sequence ID" value="NC_010524.1"/>
</dbReference>
<dbReference type="SMR" id="B1XWG6"/>
<dbReference type="STRING" id="395495.Lcho_1567"/>
<dbReference type="KEGG" id="lch:Lcho_1567"/>
<dbReference type="eggNOG" id="COG0343">
    <property type="taxonomic scope" value="Bacteria"/>
</dbReference>
<dbReference type="HOGENOM" id="CLU_022060_0_1_4"/>
<dbReference type="OrthoDB" id="9805417at2"/>
<dbReference type="UniPathway" id="UPA00392"/>
<dbReference type="Proteomes" id="UP000001693">
    <property type="component" value="Chromosome"/>
</dbReference>
<dbReference type="GO" id="GO:0005829">
    <property type="term" value="C:cytosol"/>
    <property type="evidence" value="ECO:0007669"/>
    <property type="project" value="TreeGrafter"/>
</dbReference>
<dbReference type="GO" id="GO:0046872">
    <property type="term" value="F:metal ion binding"/>
    <property type="evidence" value="ECO:0007669"/>
    <property type="project" value="UniProtKB-KW"/>
</dbReference>
<dbReference type="GO" id="GO:0008479">
    <property type="term" value="F:tRNA-guanosine(34) queuine transglycosylase activity"/>
    <property type="evidence" value="ECO:0007669"/>
    <property type="project" value="UniProtKB-UniRule"/>
</dbReference>
<dbReference type="GO" id="GO:0008616">
    <property type="term" value="P:queuosine biosynthetic process"/>
    <property type="evidence" value="ECO:0007669"/>
    <property type="project" value="UniProtKB-UniRule"/>
</dbReference>
<dbReference type="GO" id="GO:0002099">
    <property type="term" value="P:tRNA wobble guanine modification"/>
    <property type="evidence" value="ECO:0007669"/>
    <property type="project" value="TreeGrafter"/>
</dbReference>
<dbReference type="GO" id="GO:0101030">
    <property type="term" value="P:tRNA-guanine transglycosylation"/>
    <property type="evidence" value="ECO:0007669"/>
    <property type="project" value="InterPro"/>
</dbReference>
<dbReference type="FunFam" id="3.20.20.105:FF:000001">
    <property type="entry name" value="Queuine tRNA-ribosyltransferase"/>
    <property type="match status" value="1"/>
</dbReference>
<dbReference type="Gene3D" id="3.20.20.105">
    <property type="entry name" value="Queuine tRNA-ribosyltransferase-like"/>
    <property type="match status" value="1"/>
</dbReference>
<dbReference type="HAMAP" id="MF_00168">
    <property type="entry name" value="Q_tRNA_Tgt"/>
    <property type="match status" value="1"/>
</dbReference>
<dbReference type="InterPro" id="IPR050076">
    <property type="entry name" value="ArchSynthase1/Queuine_TRR"/>
</dbReference>
<dbReference type="InterPro" id="IPR004803">
    <property type="entry name" value="TGT"/>
</dbReference>
<dbReference type="InterPro" id="IPR036511">
    <property type="entry name" value="TGT-like_sf"/>
</dbReference>
<dbReference type="InterPro" id="IPR002616">
    <property type="entry name" value="tRNA_ribo_trans-like"/>
</dbReference>
<dbReference type="NCBIfam" id="TIGR00430">
    <property type="entry name" value="Q_tRNA_tgt"/>
    <property type="match status" value="1"/>
</dbReference>
<dbReference type="NCBIfam" id="TIGR00449">
    <property type="entry name" value="tgt_general"/>
    <property type="match status" value="1"/>
</dbReference>
<dbReference type="PANTHER" id="PTHR46499">
    <property type="entry name" value="QUEUINE TRNA-RIBOSYLTRANSFERASE"/>
    <property type="match status" value="1"/>
</dbReference>
<dbReference type="PANTHER" id="PTHR46499:SF1">
    <property type="entry name" value="QUEUINE TRNA-RIBOSYLTRANSFERASE"/>
    <property type="match status" value="1"/>
</dbReference>
<dbReference type="Pfam" id="PF01702">
    <property type="entry name" value="TGT"/>
    <property type="match status" value="1"/>
</dbReference>
<dbReference type="SUPFAM" id="SSF51713">
    <property type="entry name" value="tRNA-guanine transglycosylase"/>
    <property type="match status" value="1"/>
</dbReference>
<comment type="function">
    <text evidence="1">Catalyzes the base-exchange of a guanine (G) residue with the queuine precursor 7-aminomethyl-7-deazaguanine (PreQ1) at position 34 (anticodon wobble position) in tRNAs with GU(N) anticodons (tRNA-Asp, -Asn, -His and -Tyr). Catalysis occurs through a double-displacement mechanism. The nucleophile active site attacks the C1' of nucleotide 34 to detach the guanine base from the RNA, forming a covalent enzyme-RNA intermediate. The proton acceptor active site deprotonates the incoming PreQ1, allowing a nucleophilic attack on the C1' of the ribose to form the product. After dissociation, two additional enzymatic reactions on the tRNA convert PreQ1 to queuine (Q), resulting in the hypermodified nucleoside queuosine (7-(((4,5-cis-dihydroxy-2-cyclopenten-1-yl)amino)methyl)-7-deazaguanosine).</text>
</comment>
<comment type="catalytic activity">
    <reaction evidence="1">
        <text>7-aminomethyl-7-carbaguanine + guanosine(34) in tRNA = 7-aminomethyl-7-carbaguanosine(34) in tRNA + guanine</text>
        <dbReference type="Rhea" id="RHEA:24104"/>
        <dbReference type="Rhea" id="RHEA-COMP:10341"/>
        <dbReference type="Rhea" id="RHEA-COMP:10342"/>
        <dbReference type="ChEBI" id="CHEBI:16235"/>
        <dbReference type="ChEBI" id="CHEBI:58703"/>
        <dbReference type="ChEBI" id="CHEBI:74269"/>
        <dbReference type="ChEBI" id="CHEBI:82833"/>
        <dbReference type="EC" id="2.4.2.29"/>
    </reaction>
</comment>
<comment type="cofactor">
    <cofactor evidence="1">
        <name>Zn(2+)</name>
        <dbReference type="ChEBI" id="CHEBI:29105"/>
    </cofactor>
    <text evidence="1">Binds 1 zinc ion per subunit.</text>
</comment>
<comment type="pathway">
    <text evidence="1">tRNA modification; tRNA-queuosine biosynthesis.</text>
</comment>
<comment type="subunit">
    <text evidence="1">Homodimer. Within each dimer, one monomer is responsible for RNA recognition and catalysis, while the other monomer binds to the replacement base PreQ1.</text>
</comment>
<comment type="similarity">
    <text evidence="1">Belongs to the queuine tRNA-ribosyltransferase family.</text>
</comment>
<gene>
    <name evidence="1" type="primary">tgt</name>
    <name type="ordered locus">Lcho_1567</name>
</gene>
<reference key="1">
    <citation type="submission" date="2008-03" db="EMBL/GenBank/DDBJ databases">
        <title>Complete sequence of Leptothrix cholodnii SP-6.</title>
        <authorList>
            <consortium name="US DOE Joint Genome Institute"/>
            <person name="Copeland A."/>
            <person name="Lucas S."/>
            <person name="Lapidus A."/>
            <person name="Glavina del Rio T."/>
            <person name="Dalin E."/>
            <person name="Tice H."/>
            <person name="Bruce D."/>
            <person name="Goodwin L."/>
            <person name="Pitluck S."/>
            <person name="Chertkov O."/>
            <person name="Brettin T."/>
            <person name="Detter J.C."/>
            <person name="Han C."/>
            <person name="Kuske C.R."/>
            <person name="Schmutz J."/>
            <person name="Larimer F."/>
            <person name="Land M."/>
            <person name="Hauser L."/>
            <person name="Kyrpides N."/>
            <person name="Lykidis A."/>
            <person name="Emerson D."/>
            <person name="Richardson P."/>
        </authorList>
    </citation>
    <scope>NUCLEOTIDE SEQUENCE [LARGE SCALE GENOMIC DNA]</scope>
    <source>
        <strain>ATCC 51168 / LMG 8142 / SP-6</strain>
    </source>
</reference>